<proteinExistence type="evidence at transcript level"/>
<evidence type="ECO:0000250" key="1"/>
<evidence type="ECO:0000250" key="2">
    <source>
        <dbReference type="UniProtKB" id="Q7L1T6"/>
    </source>
</evidence>
<evidence type="ECO:0000255" key="3">
    <source>
        <dbReference type="PROSITE-ProRule" id="PRU00279"/>
    </source>
</evidence>
<evidence type="ECO:0000255" key="4">
    <source>
        <dbReference type="PROSITE-ProRule" id="PRU00547"/>
    </source>
</evidence>
<evidence type="ECO:0000255" key="5">
    <source>
        <dbReference type="PROSITE-ProRule" id="PRU00716"/>
    </source>
</evidence>
<evidence type="ECO:0000256" key="6">
    <source>
        <dbReference type="SAM" id="MobiDB-lite"/>
    </source>
</evidence>
<evidence type="ECO:0000269" key="7">
    <source>
    </source>
</evidence>
<evidence type="ECO:0000269" key="8">
    <source>
    </source>
</evidence>
<evidence type="ECO:0000269" key="9">
    <source>
    </source>
</evidence>
<evidence type="ECO:0000269" key="10">
    <source>
    </source>
</evidence>
<evidence type="ECO:0000269" key="11">
    <source>
    </source>
</evidence>
<evidence type="ECO:0000269" key="12">
    <source>
    </source>
</evidence>
<evidence type="ECO:0000303" key="13">
    <source>
    </source>
</evidence>
<evidence type="ECO:0000305" key="14"/>
<gene>
    <name type="primary">Cyb5r4</name>
    <name type="synonym">Ncb5or</name>
</gene>
<accession>Q3TDX8</accession>
<accession>E9Q129</accession>
<accession>Q3TJH3</accession>
<accession>Q3U012</accession>
<accession>Q6VXY4</accession>
<accession>Q6VXY5</accession>
<accession>Q8BJV8</accession>
<accession>Q8BTI5</accession>
<accession>Q8R3H8</accession>
<accession>Q99LY4</accession>
<accession>Q99P29</accession>
<keyword id="KW-0007">Acetylation</keyword>
<keyword id="KW-0025">Alternative splicing</keyword>
<keyword id="KW-0256">Endoplasmic reticulum</keyword>
<keyword id="KW-0274">FAD</keyword>
<keyword id="KW-0285">Flavoprotein</keyword>
<keyword id="KW-0349">Heme</keyword>
<keyword id="KW-0408">Iron</keyword>
<keyword id="KW-0479">Metal-binding</keyword>
<keyword id="KW-0520">NAD</keyword>
<keyword id="KW-0560">Oxidoreductase</keyword>
<keyword id="KW-1185">Reference proteome</keyword>
<sequence>MLNVPSQAFPAPGSQQRVSSQGRSKVPLKQGRSLMDWIRLTKSGKDLTGLKGGLIEVTEEELKKHNKKEDCWICIRGFVYNVSPYMEYHPGGEDELMRAAGADGTDLFNEVHRWVNYESMLKECLVGRMAVKPAVPKDCHEGKRVLNGMLPKSQMSDTLPRDVTDTLPREDLSSPSYDWFQTESSVTIVVYTKQKNISLDSVIVDLQDDSLRAEAVIKDHSYLVHVGLSHEVQENFSVRVIENVGKIEIVLQKKESVSWQCLGDHLEKHDSFIPKKDTGLYYRRCQLISKEDVTHDTRLFCLMLPPSTHLQVPVGQHVYLKLSVTGAEIVKPYTPVSDSLLSDFKEPVLSPNKYICFLIKIYPAGLFTPELDRLQIGDFISVSGPEGDFKVSKLQEVEDLFLLAAGTGFTPMVTVLNYALSHMSSLRKVKLMFFNKTEDDIIWRCQLEKLALREKRFDVEFVLSAPSPEWNGKQGHISRALLSEFLQRSSENSRAFLCICGPTPFTDEGIRLLHDLNFSDDEIHGFTA</sequence>
<organism>
    <name type="scientific">Mus musculus</name>
    <name type="common">Mouse</name>
    <dbReference type="NCBI Taxonomy" id="10090"/>
    <lineage>
        <taxon>Eukaryota</taxon>
        <taxon>Metazoa</taxon>
        <taxon>Chordata</taxon>
        <taxon>Craniata</taxon>
        <taxon>Vertebrata</taxon>
        <taxon>Euteleostomi</taxon>
        <taxon>Mammalia</taxon>
        <taxon>Eutheria</taxon>
        <taxon>Euarchontoglires</taxon>
        <taxon>Glires</taxon>
        <taxon>Rodentia</taxon>
        <taxon>Myomorpha</taxon>
        <taxon>Muroidea</taxon>
        <taxon>Muridae</taxon>
        <taxon>Murinae</taxon>
        <taxon>Mus</taxon>
        <taxon>Mus</taxon>
    </lineage>
</organism>
<reference key="1">
    <citation type="journal article" date="2005" name="Science">
        <title>The transcriptional landscape of the mammalian genome.</title>
        <authorList>
            <person name="Carninci P."/>
            <person name="Kasukawa T."/>
            <person name="Katayama S."/>
            <person name="Gough J."/>
            <person name="Frith M.C."/>
            <person name="Maeda N."/>
            <person name="Oyama R."/>
            <person name="Ravasi T."/>
            <person name="Lenhard B."/>
            <person name="Wells C."/>
            <person name="Kodzius R."/>
            <person name="Shimokawa K."/>
            <person name="Bajic V.B."/>
            <person name="Brenner S.E."/>
            <person name="Batalov S."/>
            <person name="Forrest A.R."/>
            <person name="Zavolan M."/>
            <person name="Davis M.J."/>
            <person name="Wilming L.G."/>
            <person name="Aidinis V."/>
            <person name="Allen J.E."/>
            <person name="Ambesi-Impiombato A."/>
            <person name="Apweiler R."/>
            <person name="Aturaliya R.N."/>
            <person name="Bailey T.L."/>
            <person name="Bansal M."/>
            <person name="Baxter L."/>
            <person name="Beisel K.W."/>
            <person name="Bersano T."/>
            <person name="Bono H."/>
            <person name="Chalk A.M."/>
            <person name="Chiu K.P."/>
            <person name="Choudhary V."/>
            <person name="Christoffels A."/>
            <person name="Clutterbuck D.R."/>
            <person name="Crowe M.L."/>
            <person name="Dalla E."/>
            <person name="Dalrymple B.P."/>
            <person name="de Bono B."/>
            <person name="Della Gatta G."/>
            <person name="di Bernardo D."/>
            <person name="Down T."/>
            <person name="Engstrom P."/>
            <person name="Fagiolini M."/>
            <person name="Faulkner G."/>
            <person name="Fletcher C.F."/>
            <person name="Fukushima T."/>
            <person name="Furuno M."/>
            <person name="Futaki S."/>
            <person name="Gariboldi M."/>
            <person name="Georgii-Hemming P."/>
            <person name="Gingeras T.R."/>
            <person name="Gojobori T."/>
            <person name="Green R.E."/>
            <person name="Gustincich S."/>
            <person name="Harbers M."/>
            <person name="Hayashi Y."/>
            <person name="Hensch T.K."/>
            <person name="Hirokawa N."/>
            <person name="Hill D."/>
            <person name="Huminiecki L."/>
            <person name="Iacono M."/>
            <person name="Ikeo K."/>
            <person name="Iwama A."/>
            <person name="Ishikawa T."/>
            <person name="Jakt M."/>
            <person name="Kanapin A."/>
            <person name="Katoh M."/>
            <person name="Kawasawa Y."/>
            <person name="Kelso J."/>
            <person name="Kitamura H."/>
            <person name="Kitano H."/>
            <person name="Kollias G."/>
            <person name="Krishnan S.P."/>
            <person name="Kruger A."/>
            <person name="Kummerfeld S.K."/>
            <person name="Kurochkin I.V."/>
            <person name="Lareau L.F."/>
            <person name="Lazarevic D."/>
            <person name="Lipovich L."/>
            <person name="Liu J."/>
            <person name="Liuni S."/>
            <person name="McWilliam S."/>
            <person name="Madan Babu M."/>
            <person name="Madera M."/>
            <person name="Marchionni L."/>
            <person name="Matsuda H."/>
            <person name="Matsuzawa S."/>
            <person name="Miki H."/>
            <person name="Mignone F."/>
            <person name="Miyake S."/>
            <person name="Morris K."/>
            <person name="Mottagui-Tabar S."/>
            <person name="Mulder N."/>
            <person name="Nakano N."/>
            <person name="Nakauchi H."/>
            <person name="Ng P."/>
            <person name="Nilsson R."/>
            <person name="Nishiguchi S."/>
            <person name="Nishikawa S."/>
            <person name="Nori F."/>
            <person name="Ohara O."/>
            <person name="Okazaki Y."/>
            <person name="Orlando V."/>
            <person name="Pang K.C."/>
            <person name="Pavan W.J."/>
            <person name="Pavesi G."/>
            <person name="Pesole G."/>
            <person name="Petrovsky N."/>
            <person name="Piazza S."/>
            <person name="Reed J."/>
            <person name="Reid J.F."/>
            <person name="Ring B.Z."/>
            <person name="Ringwald M."/>
            <person name="Rost B."/>
            <person name="Ruan Y."/>
            <person name="Salzberg S.L."/>
            <person name="Sandelin A."/>
            <person name="Schneider C."/>
            <person name="Schoenbach C."/>
            <person name="Sekiguchi K."/>
            <person name="Semple C.A."/>
            <person name="Seno S."/>
            <person name="Sessa L."/>
            <person name="Sheng Y."/>
            <person name="Shibata Y."/>
            <person name="Shimada H."/>
            <person name="Shimada K."/>
            <person name="Silva D."/>
            <person name="Sinclair B."/>
            <person name="Sperling S."/>
            <person name="Stupka E."/>
            <person name="Sugiura K."/>
            <person name="Sultana R."/>
            <person name="Takenaka Y."/>
            <person name="Taki K."/>
            <person name="Tammoja K."/>
            <person name="Tan S.L."/>
            <person name="Tang S."/>
            <person name="Taylor M.S."/>
            <person name="Tegner J."/>
            <person name="Teichmann S.A."/>
            <person name="Ueda H.R."/>
            <person name="van Nimwegen E."/>
            <person name="Verardo R."/>
            <person name="Wei C.L."/>
            <person name="Yagi K."/>
            <person name="Yamanishi H."/>
            <person name="Zabarovsky E."/>
            <person name="Zhu S."/>
            <person name="Zimmer A."/>
            <person name="Hide W."/>
            <person name="Bult C."/>
            <person name="Grimmond S.M."/>
            <person name="Teasdale R.D."/>
            <person name="Liu E.T."/>
            <person name="Brusic V."/>
            <person name="Quackenbush J."/>
            <person name="Wahlestedt C."/>
            <person name="Mattick J.S."/>
            <person name="Hume D.A."/>
            <person name="Kai C."/>
            <person name="Sasaki D."/>
            <person name="Tomaru Y."/>
            <person name="Fukuda S."/>
            <person name="Kanamori-Katayama M."/>
            <person name="Suzuki M."/>
            <person name="Aoki J."/>
            <person name="Arakawa T."/>
            <person name="Iida J."/>
            <person name="Imamura K."/>
            <person name="Itoh M."/>
            <person name="Kato T."/>
            <person name="Kawaji H."/>
            <person name="Kawagashira N."/>
            <person name="Kawashima T."/>
            <person name="Kojima M."/>
            <person name="Kondo S."/>
            <person name="Konno H."/>
            <person name="Nakano K."/>
            <person name="Ninomiya N."/>
            <person name="Nishio T."/>
            <person name="Okada M."/>
            <person name="Plessy C."/>
            <person name="Shibata K."/>
            <person name="Shiraki T."/>
            <person name="Suzuki S."/>
            <person name="Tagami M."/>
            <person name="Waki K."/>
            <person name="Watahiki A."/>
            <person name="Okamura-Oho Y."/>
            <person name="Suzuki H."/>
            <person name="Kawai J."/>
            <person name="Hayashizaki Y."/>
        </authorList>
    </citation>
    <scope>NUCLEOTIDE SEQUENCE [LARGE SCALE MRNA] (ISOFORM 1)</scope>
    <scope>VARIANT ASP-THR-LEU-PRO-ARG-ASP-VAL-THR-156 INS</scope>
    <source>
        <strain>C57BL/6J</strain>
        <strain>NOD</strain>
        <tissue>Eye</tissue>
        <tissue>Liver</tissue>
        <tissue>Spinal cord</tissue>
        <tissue>Spleen</tissue>
    </source>
</reference>
<reference key="2">
    <citation type="journal article" date="2009" name="PLoS Biol.">
        <title>Lineage-specific biology revealed by a finished genome assembly of the mouse.</title>
        <authorList>
            <person name="Church D.M."/>
            <person name="Goodstadt L."/>
            <person name="Hillier L.W."/>
            <person name="Zody M.C."/>
            <person name="Goldstein S."/>
            <person name="She X."/>
            <person name="Bult C.J."/>
            <person name="Agarwala R."/>
            <person name="Cherry J.L."/>
            <person name="DiCuccio M."/>
            <person name="Hlavina W."/>
            <person name="Kapustin Y."/>
            <person name="Meric P."/>
            <person name="Maglott D."/>
            <person name="Birtle Z."/>
            <person name="Marques A.C."/>
            <person name="Graves T."/>
            <person name="Zhou S."/>
            <person name="Teague B."/>
            <person name="Potamousis K."/>
            <person name="Churas C."/>
            <person name="Place M."/>
            <person name="Herschleb J."/>
            <person name="Runnheim R."/>
            <person name="Forrest D."/>
            <person name="Amos-Landgraf J."/>
            <person name="Schwartz D.C."/>
            <person name="Cheng Z."/>
            <person name="Lindblad-Toh K."/>
            <person name="Eichler E.E."/>
            <person name="Ponting C.P."/>
        </authorList>
    </citation>
    <scope>NUCLEOTIDE SEQUENCE [LARGE SCALE GENOMIC DNA]</scope>
    <source>
        <strain>C57BL/6J</strain>
    </source>
</reference>
<reference key="3">
    <citation type="journal article" date="2004" name="Genome Res.">
        <title>The status, quality, and expansion of the NIH full-length cDNA project: the Mammalian Gene Collection (MGC).</title>
        <authorList>
            <consortium name="The MGC Project Team"/>
        </authorList>
    </citation>
    <scope>NUCLEOTIDE SEQUENCE [LARGE SCALE MRNA] (ISOFORM 1)</scope>
    <scope>VARIANT ASP-THR-LEU-PRO-ARG-ASP-VAL-THR-156 INS</scope>
    <source>
        <strain>Czech II</strain>
        <strain>FVB/N</strain>
        <tissue>Mammary tumor</tissue>
    </source>
</reference>
<reference key="4">
    <citation type="journal article" date="1999" name="Proc. Natl. Acad. Sci. U.S.A.">
        <title>Identification of a cytochrome b-type NAD(P)H oxidoreductase ubiquitously expressed in human cells.</title>
        <authorList>
            <person name="Zhu H."/>
            <person name="Qiu H."/>
            <person name="Yoon H.-W."/>
            <person name="Huang S."/>
            <person name="Bunn H.F."/>
        </authorList>
    </citation>
    <scope>NUCLEOTIDE SEQUENCE [MRNA] OF 35-528 (ISOFORM 1)</scope>
    <scope>VARIANT ASP-THR-LEU-PRO-ARG-ASP-VAL-THR-156 INS</scope>
</reference>
<reference key="5">
    <citation type="journal article" date="2004" name="Genomics">
        <title>Identification and characterization of a novel splice variant of mouse and rat cytochrome b5/cytochrome b5 reductase.</title>
        <authorList>
            <person name="Curry B.J."/>
            <person name="Roman S.D."/>
            <person name="Wallace C.A."/>
            <person name="Scott R."/>
            <person name="Miriami E."/>
            <person name="Aitken R.J."/>
        </authorList>
    </citation>
    <scope>NUCLEOTIDE SEQUENCE [MRNA] OF 35-528 (ISOFORMS 1 AND 2)</scope>
    <scope>VARIANT ASP-THR-LEU-PRO-ARG-ASP-VAL-THR-156 INS</scope>
    <scope>TISSUE SPECIFICITY</scope>
    <source>
        <strain>SWR/J</strain>
        <tissue>Testis</tissue>
    </source>
</reference>
<reference key="6">
    <citation type="journal article" date="2004" name="Proc. Natl. Acad. Sci. U.S.A.">
        <title>Absence of a reductase, NCB5OR, causes insulin-deficient diabetes.</title>
        <authorList>
            <person name="Xie J."/>
            <person name="Zhu H."/>
            <person name="Larade K."/>
            <person name="Ladoux A."/>
            <person name="Seguritan A."/>
            <person name="Chu M."/>
            <person name="Ito S."/>
            <person name="Bronson R.T."/>
            <person name="Leiter E.H."/>
            <person name="Zhang C.-Y."/>
            <person name="Rosen E.D."/>
            <person name="Bunn H.F."/>
        </authorList>
    </citation>
    <scope>FUNCTION</scope>
    <scope>DISRUPTION PHENOTYPE</scope>
</reference>
<reference key="7">
    <citation type="journal article" date="2006" name="Biochim. Biophys. Acta">
        <title>Promoter characterization and transcriptional regulation of Ncb5or, a novel reductase necessary for pancreatic beta-cell maintenance.</title>
        <authorList>
            <person name="Larade K."/>
            <person name="Bunn H.F."/>
        </authorList>
    </citation>
    <scope>TISSUE SPECIFICITY</scope>
</reference>
<feature type="chain" id="PRO_0000410469" description="Cytochrome b5 reductase 4">
    <location>
        <begin position="1"/>
        <end position="528"/>
    </location>
</feature>
<feature type="domain" description="Cytochrome b5 heme-binding" evidence="3">
    <location>
        <begin position="54"/>
        <end position="130"/>
    </location>
</feature>
<feature type="domain" description="CS" evidence="4">
    <location>
        <begin position="172"/>
        <end position="263"/>
    </location>
</feature>
<feature type="domain" description="FAD-binding FR-type" evidence="5">
    <location>
        <begin position="280"/>
        <end position="392"/>
    </location>
</feature>
<feature type="region of interest" description="Disordered" evidence="6">
    <location>
        <begin position="1"/>
        <end position="29"/>
    </location>
</feature>
<feature type="compositionally biased region" description="Low complexity" evidence="6">
    <location>
        <begin position="13"/>
        <end position="24"/>
    </location>
</feature>
<feature type="binding site" description="axial binding residue" evidence="3">
    <location>
        <position position="89"/>
    </location>
    <ligand>
        <name>heme</name>
        <dbReference type="ChEBI" id="CHEBI:30413"/>
    </ligand>
    <ligandPart>
        <name>Fe</name>
        <dbReference type="ChEBI" id="CHEBI:18248"/>
    </ligandPart>
</feature>
<feature type="binding site" description="axial binding residue" evidence="3">
    <location>
        <position position="112"/>
    </location>
    <ligand>
        <name>heme</name>
        <dbReference type="ChEBI" id="CHEBI:30413"/>
    </ligand>
    <ligandPart>
        <name>Fe</name>
        <dbReference type="ChEBI" id="CHEBI:18248"/>
    </ligandPart>
</feature>
<feature type="binding site" evidence="1">
    <location>
        <begin position="372"/>
        <end position="387"/>
    </location>
    <ligand>
        <name>FAD</name>
        <dbReference type="ChEBI" id="CHEBI:57692"/>
    </ligand>
</feature>
<feature type="binding site" evidence="1">
    <location>
        <begin position="399"/>
        <end position="431"/>
    </location>
    <ligand>
        <name>FAD</name>
        <dbReference type="ChEBI" id="CHEBI:57692"/>
    </ligand>
</feature>
<feature type="modified residue" description="N-acetylmethionine" evidence="2">
    <location>
        <position position="1"/>
    </location>
</feature>
<feature type="splice variant" id="VSP_041453" description="In isoform 2." evidence="13">
    <location>
        <begin position="326"/>
        <end position="376"/>
    </location>
</feature>
<feature type="sequence variant" evidence="7 8 10 11">
    <original>S</original>
    <variation>SDTLPRDVT</variation>
    <location>
        <position position="156"/>
    </location>
</feature>
<feature type="sequence conflict" description="In Ref. 1; BAE34044/BAE41470/BAE42908, 4; AAK08116 and 5; AAQ83900/AAQ83901." evidence="14" ref="1 4 5">
    <original>D</original>
    <variation>G</variation>
    <location>
        <position position="171"/>
    </location>
</feature>
<feature type="sequence conflict" description="In Ref. 3; AAH25438." evidence="14" ref="3">
    <original>V</original>
    <variation>I</variation>
    <location>
        <position position="216"/>
    </location>
</feature>
<feature type="sequence conflict" description="In Ref. 1; BAE34044/BAE41470/BAE42908, 3; AAH02170, 4; AAK08116 and 5; AAQ83900/AAQ83901." evidence="14" ref="1 3 4 5">
    <original>F</original>
    <variation>L</variation>
    <location>
        <position position="300"/>
    </location>
</feature>
<feature type="sequence conflict" description="In Ref. 1; BAE34044." evidence="14" ref="1">
    <original>V</original>
    <variation>L</variation>
    <location>
        <position position="336"/>
    </location>
</feature>
<feature type="sequence conflict" description="In Ref. 1; BAE41470." evidence="14" ref="1">
    <original>S</original>
    <variation>P</variation>
    <location>
        <position position="339"/>
    </location>
</feature>
<feature type="sequence conflict" description="In Ref. 1; BAE34044/BAE41470/BAE42908, 3; AAH02170/AAH25438, 4; AAK08116 and 5; AAQ83900." evidence="14" ref="1 3 4 5">
    <original>C</original>
    <variation>Y</variation>
    <location>
        <position position="356"/>
    </location>
</feature>
<feature type="sequence conflict" description="In Ref. 1; BAE34044/BAE41470/BAE42908, 3; AAH02170/AAH25438, 4; AAK08116 and 5; AAQ83900/AAQ83901." evidence="14" ref="1 3 4 5">
    <original>D</original>
    <variation>N</variation>
    <location>
        <position position="388"/>
    </location>
</feature>
<feature type="sequence conflict" description="In Ref. 3; AAH25438." evidence="14" ref="3">
    <original>K</original>
    <variation>T</variation>
    <location>
        <position position="393"/>
    </location>
</feature>
<feature type="sequence conflict" description="In Ref. 1; BAC37357." evidence="14" ref="1">
    <original>E</original>
    <variation>D</variation>
    <location>
        <position position="438"/>
    </location>
</feature>
<feature type="sequence conflict" description="In Ref. 1; BAE39522." evidence="14" ref="1">
    <original>P</original>
    <variation>Q</variation>
    <location>
        <position position="504"/>
    </location>
</feature>
<name>NB5R4_MOUSE</name>
<protein>
    <recommendedName>
        <fullName>Cytochrome b5 reductase 4</fullName>
        <ecNumber>1.6.2.2</ecNumber>
    </recommendedName>
    <alternativeName>
        <fullName>Flavohemoprotein b5/b5R</fullName>
        <shortName>b5+b5R</shortName>
    </alternativeName>
    <alternativeName>
        <fullName>N-terminal cytochrome b5 and cytochrome b5 oxidoreductase domain-containing protein</fullName>
    </alternativeName>
    <alternativeName>
        <fullName>cb5/cb5R</fullName>
    </alternativeName>
</protein>
<dbReference type="EC" id="1.6.2.2"/>
<dbReference type="EMBL" id="AK078682">
    <property type="protein sequence ID" value="BAC37357.1"/>
    <property type="molecule type" value="mRNA"/>
</dbReference>
<dbReference type="EMBL" id="AK090159">
    <property type="protein sequence ID" value="BAC41118.1"/>
    <property type="status" value="ALT_INIT"/>
    <property type="molecule type" value="mRNA"/>
</dbReference>
<dbReference type="EMBL" id="AK157312">
    <property type="protein sequence ID" value="BAE34044.1"/>
    <property type="status" value="ALT_INIT"/>
    <property type="molecule type" value="mRNA"/>
</dbReference>
<dbReference type="EMBL" id="AK167436">
    <property type="protein sequence ID" value="BAE39522.1"/>
    <property type="molecule type" value="mRNA"/>
</dbReference>
<dbReference type="EMBL" id="AK169937">
    <property type="protein sequence ID" value="BAE41470.1"/>
    <property type="molecule type" value="mRNA"/>
</dbReference>
<dbReference type="EMBL" id="AK172252">
    <property type="protein sequence ID" value="BAE42908.1"/>
    <property type="status" value="ALT_INIT"/>
    <property type="molecule type" value="mRNA"/>
</dbReference>
<dbReference type="EMBL" id="AC156793">
    <property type="status" value="NOT_ANNOTATED_CDS"/>
    <property type="molecule type" value="Genomic_DNA"/>
</dbReference>
<dbReference type="EMBL" id="BC025438">
    <property type="protein sequence ID" value="AAH25438.1"/>
    <property type="status" value="ALT_INIT"/>
    <property type="molecule type" value="mRNA"/>
</dbReference>
<dbReference type="EMBL" id="BC002170">
    <property type="protein sequence ID" value="AAH02170.1"/>
    <property type="molecule type" value="mRNA"/>
</dbReference>
<dbReference type="EMBL" id="AF338818">
    <property type="protein sequence ID" value="AAK08116.1"/>
    <property type="molecule type" value="mRNA"/>
</dbReference>
<dbReference type="EMBL" id="AY321368">
    <property type="protein sequence ID" value="AAQ83900.1"/>
    <property type="molecule type" value="mRNA"/>
</dbReference>
<dbReference type="EMBL" id="AY321369">
    <property type="protein sequence ID" value="AAQ83901.1"/>
    <property type="molecule type" value="mRNA"/>
</dbReference>
<dbReference type="CCDS" id="CCDS40716.2">
    <molecule id="Q3TDX8-4"/>
</dbReference>
<dbReference type="RefSeq" id="NP_001346891.1">
    <molecule id="Q3TDX8-5"/>
    <property type="nucleotide sequence ID" value="NM_001359962.1"/>
</dbReference>
<dbReference type="RefSeq" id="NP_077157.2">
    <molecule id="Q3TDX8-4"/>
    <property type="nucleotide sequence ID" value="NM_024195.2"/>
</dbReference>
<dbReference type="RefSeq" id="XP_006511262.1">
    <property type="nucleotide sequence ID" value="XM_006511199.1"/>
</dbReference>
<dbReference type="SMR" id="Q3TDX8"/>
<dbReference type="BioGRID" id="234467">
    <property type="interactions" value="4"/>
</dbReference>
<dbReference type="FunCoup" id="Q3TDX8">
    <property type="interactions" value="3791"/>
</dbReference>
<dbReference type="IntAct" id="Q3TDX8">
    <property type="interactions" value="4"/>
</dbReference>
<dbReference type="MINT" id="Q3TDX8"/>
<dbReference type="STRING" id="10090.ENSMUSP00000126119"/>
<dbReference type="GlyGen" id="Q3TDX8">
    <property type="glycosylation" value="2 sites, 1 O-linked glycan (1 site)"/>
</dbReference>
<dbReference type="iPTMnet" id="Q3TDX8"/>
<dbReference type="PhosphoSitePlus" id="Q3TDX8"/>
<dbReference type="PaxDb" id="10090-ENSMUSP00000126119"/>
<dbReference type="PeptideAtlas" id="Q3TDX8"/>
<dbReference type="ProteomicsDB" id="252784">
    <molecule id="Q3TDX8-4"/>
</dbReference>
<dbReference type="ProteomicsDB" id="252785">
    <molecule id="Q3TDX8-5"/>
</dbReference>
<dbReference type="Pumba" id="Q3TDX8"/>
<dbReference type="Antibodypedia" id="18533">
    <property type="antibodies" value="153 antibodies from 29 providers"/>
</dbReference>
<dbReference type="DNASU" id="266690"/>
<dbReference type="Ensembl" id="ENSMUST00000168529.9">
    <molecule id="Q3TDX8-4"/>
    <property type="protein sequence ID" value="ENSMUSP00000126119.3"/>
    <property type="gene ID" value="ENSMUSG00000032872.17"/>
</dbReference>
<dbReference type="GeneID" id="266690"/>
<dbReference type="KEGG" id="mmu:266690"/>
<dbReference type="UCSC" id="uc009qyc.2">
    <molecule id="Q3TDX8-4"/>
    <property type="organism name" value="mouse"/>
</dbReference>
<dbReference type="UCSC" id="uc009qyf.2">
    <molecule id="Q3TDX8-5"/>
    <property type="organism name" value="mouse"/>
</dbReference>
<dbReference type="AGR" id="MGI:2386848"/>
<dbReference type="CTD" id="51167"/>
<dbReference type="MGI" id="MGI:2386848">
    <property type="gene designation" value="Cyb5r4"/>
</dbReference>
<dbReference type="VEuPathDB" id="HostDB:ENSMUSG00000032872"/>
<dbReference type="eggNOG" id="KOG0534">
    <property type="taxonomic scope" value="Eukaryota"/>
</dbReference>
<dbReference type="eggNOG" id="KOG0536">
    <property type="taxonomic scope" value="Eukaryota"/>
</dbReference>
<dbReference type="GeneTree" id="ENSGT00940000155536"/>
<dbReference type="HOGENOM" id="CLU_003827_0_2_1"/>
<dbReference type="InParanoid" id="Q3TDX8"/>
<dbReference type="OMA" id="ERFSCTN"/>
<dbReference type="OrthoDB" id="432299at2759"/>
<dbReference type="PhylomeDB" id="Q3TDX8"/>
<dbReference type="TreeFam" id="TF313874"/>
<dbReference type="BRENDA" id="1.6.2.2">
    <property type="organism ID" value="3474"/>
</dbReference>
<dbReference type="Reactome" id="R-MMU-1237044">
    <property type="pathway name" value="Erythrocytes take up carbon dioxide and release oxygen"/>
</dbReference>
<dbReference type="BioGRID-ORCS" id="266690">
    <property type="hits" value="11 hits in 75 CRISPR screens"/>
</dbReference>
<dbReference type="ChiTaRS" id="Cyb5r4">
    <property type="organism name" value="mouse"/>
</dbReference>
<dbReference type="PRO" id="PR:Q3TDX8"/>
<dbReference type="Proteomes" id="UP000000589">
    <property type="component" value="Chromosome 9"/>
</dbReference>
<dbReference type="RNAct" id="Q3TDX8">
    <property type="molecule type" value="protein"/>
</dbReference>
<dbReference type="Bgee" id="ENSMUSG00000032872">
    <property type="expression patterns" value="Expressed in granulocyte and 83 other cell types or tissues"/>
</dbReference>
<dbReference type="ExpressionAtlas" id="Q3TDX8">
    <property type="expression patterns" value="baseline and differential"/>
</dbReference>
<dbReference type="GO" id="GO:0005737">
    <property type="term" value="C:cytoplasm"/>
    <property type="evidence" value="ECO:0000266"/>
    <property type="project" value="MGI"/>
</dbReference>
<dbReference type="GO" id="GO:0005783">
    <property type="term" value="C:endoplasmic reticulum"/>
    <property type="evidence" value="ECO:0000314"/>
    <property type="project" value="MGI"/>
</dbReference>
<dbReference type="GO" id="GO:0048471">
    <property type="term" value="C:perinuclear region of cytoplasm"/>
    <property type="evidence" value="ECO:0007669"/>
    <property type="project" value="Ensembl"/>
</dbReference>
<dbReference type="GO" id="GO:0004128">
    <property type="term" value="F:cytochrome-b5 reductase activity, acting on NAD(P)H"/>
    <property type="evidence" value="ECO:0000314"/>
    <property type="project" value="MGI"/>
</dbReference>
<dbReference type="GO" id="GO:0020037">
    <property type="term" value="F:heme binding"/>
    <property type="evidence" value="ECO:0000266"/>
    <property type="project" value="MGI"/>
</dbReference>
<dbReference type="GO" id="GO:0046872">
    <property type="term" value="F:metal ion binding"/>
    <property type="evidence" value="ECO:0007669"/>
    <property type="project" value="UniProtKB-KW"/>
</dbReference>
<dbReference type="GO" id="GO:0016174">
    <property type="term" value="F:NAD(P)H oxidase H2O2-forming activity"/>
    <property type="evidence" value="ECO:0007669"/>
    <property type="project" value="Ensembl"/>
</dbReference>
<dbReference type="GO" id="GO:0048468">
    <property type="term" value="P:cell development"/>
    <property type="evidence" value="ECO:0000315"/>
    <property type="project" value="MGI"/>
</dbReference>
<dbReference type="GO" id="GO:0042593">
    <property type="term" value="P:glucose homeostasis"/>
    <property type="evidence" value="ECO:0000315"/>
    <property type="project" value="MGI"/>
</dbReference>
<dbReference type="GO" id="GO:0042168">
    <property type="term" value="P:heme metabolic process"/>
    <property type="evidence" value="ECO:0000266"/>
    <property type="project" value="MGI"/>
</dbReference>
<dbReference type="GO" id="GO:0030073">
    <property type="term" value="P:insulin secretion"/>
    <property type="evidence" value="ECO:0000315"/>
    <property type="project" value="MGI"/>
</dbReference>
<dbReference type="GO" id="GO:0046677">
    <property type="term" value="P:response to antibiotic"/>
    <property type="evidence" value="ECO:0000315"/>
    <property type="project" value="MGI"/>
</dbReference>
<dbReference type="GO" id="GO:0006801">
    <property type="term" value="P:superoxide metabolic process"/>
    <property type="evidence" value="ECO:0007669"/>
    <property type="project" value="Ensembl"/>
</dbReference>
<dbReference type="CDD" id="cd06183">
    <property type="entry name" value="cyt_b5_reduct_like"/>
    <property type="match status" value="1"/>
</dbReference>
<dbReference type="CDD" id="cd06490">
    <property type="entry name" value="p23_NCB5OR"/>
    <property type="match status" value="1"/>
</dbReference>
<dbReference type="FunFam" id="2.40.30.10:FF:000063">
    <property type="entry name" value="Cytochrome b5 reductase 4"/>
    <property type="match status" value="1"/>
</dbReference>
<dbReference type="FunFam" id="3.10.120.10:FF:000001">
    <property type="entry name" value="Cytochrome b5 reductase 4"/>
    <property type="match status" value="1"/>
</dbReference>
<dbReference type="FunFam" id="3.40.50.80:FF:000021">
    <property type="entry name" value="Cytochrome b5 reductase 4"/>
    <property type="match status" value="1"/>
</dbReference>
<dbReference type="FunFam" id="2.60.40.790:FF:000019">
    <property type="entry name" value="cytochrome b5 reductase 4 isoform X1"/>
    <property type="match status" value="1"/>
</dbReference>
<dbReference type="Gene3D" id="2.60.40.790">
    <property type="match status" value="1"/>
</dbReference>
<dbReference type="Gene3D" id="3.10.120.10">
    <property type="entry name" value="Cytochrome b5-like heme/steroid binding domain"/>
    <property type="match status" value="1"/>
</dbReference>
<dbReference type="Gene3D" id="3.40.50.80">
    <property type="entry name" value="Nucleotide-binding domain of ferredoxin-NADP reductase (FNR) module"/>
    <property type="match status" value="1"/>
</dbReference>
<dbReference type="Gene3D" id="2.40.30.10">
    <property type="entry name" value="Translation factors"/>
    <property type="match status" value="1"/>
</dbReference>
<dbReference type="InterPro" id="IPR008333">
    <property type="entry name" value="Cbr1-like_FAD-bd_dom"/>
</dbReference>
<dbReference type="InterPro" id="IPR007052">
    <property type="entry name" value="CS_dom"/>
</dbReference>
<dbReference type="InterPro" id="IPR001199">
    <property type="entry name" value="Cyt_B5-like_heme/steroid-bd"/>
</dbReference>
<dbReference type="InterPro" id="IPR036400">
    <property type="entry name" value="Cyt_B5-like_heme/steroid_sf"/>
</dbReference>
<dbReference type="InterPro" id="IPR018506">
    <property type="entry name" value="Cyt_B5_heme-BS"/>
</dbReference>
<dbReference type="InterPro" id="IPR051872">
    <property type="entry name" value="Cytochrome_b5/Flavoprotein_Rdt"/>
</dbReference>
<dbReference type="InterPro" id="IPR017927">
    <property type="entry name" value="FAD-bd_FR_type"/>
</dbReference>
<dbReference type="InterPro" id="IPR039261">
    <property type="entry name" value="FNR_nucleotide-bd"/>
</dbReference>
<dbReference type="InterPro" id="IPR008978">
    <property type="entry name" value="HSP20-like_chaperone"/>
</dbReference>
<dbReference type="InterPro" id="IPR001433">
    <property type="entry name" value="OxRdtase_FAD/NAD-bd"/>
</dbReference>
<dbReference type="InterPro" id="IPR037908">
    <property type="entry name" value="p23_NCB5OR"/>
</dbReference>
<dbReference type="InterPro" id="IPR017938">
    <property type="entry name" value="Riboflavin_synthase-like_b-brl"/>
</dbReference>
<dbReference type="PANTHER" id="PTHR46237:SF1">
    <property type="entry name" value="CYTOCHROME B5 REDUCTASE 4"/>
    <property type="match status" value="1"/>
</dbReference>
<dbReference type="PANTHER" id="PTHR46237">
    <property type="entry name" value="CYTOCHROME B5 REDUCTASE 4 FAMILY MEMBER"/>
    <property type="match status" value="1"/>
</dbReference>
<dbReference type="Pfam" id="PF04969">
    <property type="entry name" value="CS"/>
    <property type="match status" value="1"/>
</dbReference>
<dbReference type="Pfam" id="PF00173">
    <property type="entry name" value="Cyt-b5"/>
    <property type="match status" value="1"/>
</dbReference>
<dbReference type="Pfam" id="PF00970">
    <property type="entry name" value="FAD_binding_6"/>
    <property type="match status" value="1"/>
</dbReference>
<dbReference type="Pfam" id="PF00175">
    <property type="entry name" value="NAD_binding_1"/>
    <property type="match status" value="1"/>
</dbReference>
<dbReference type="PRINTS" id="PR00406">
    <property type="entry name" value="CYTB5RDTASE"/>
</dbReference>
<dbReference type="PRINTS" id="PR00363">
    <property type="entry name" value="CYTOCHROMEB5"/>
</dbReference>
<dbReference type="SMART" id="SM01117">
    <property type="entry name" value="Cyt-b5"/>
    <property type="match status" value="1"/>
</dbReference>
<dbReference type="SUPFAM" id="SSF55856">
    <property type="entry name" value="Cytochrome b5-like heme/steroid binding domain"/>
    <property type="match status" value="1"/>
</dbReference>
<dbReference type="SUPFAM" id="SSF52343">
    <property type="entry name" value="Ferredoxin reductase-like, C-terminal NADP-linked domain"/>
    <property type="match status" value="1"/>
</dbReference>
<dbReference type="SUPFAM" id="SSF49764">
    <property type="entry name" value="HSP20-like chaperones"/>
    <property type="match status" value="1"/>
</dbReference>
<dbReference type="SUPFAM" id="SSF63380">
    <property type="entry name" value="Riboflavin synthase domain-like"/>
    <property type="match status" value="1"/>
</dbReference>
<dbReference type="PROSITE" id="PS51203">
    <property type="entry name" value="CS"/>
    <property type="match status" value="1"/>
</dbReference>
<dbReference type="PROSITE" id="PS00191">
    <property type="entry name" value="CYTOCHROME_B5_1"/>
    <property type="match status" value="1"/>
</dbReference>
<dbReference type="PROSITE" id="PS50255">
    <property type="entry name" value="CYTOCHROME_B5_2"/>
    <property type="match status" value="1"/>
</dbReference>
<dbReference type="PROSITE" id="PS51384">
    <property type="entry name" value="FAD_FR"/>
    <property type="match status" value="1"/>
</dbReference>
<comment type="function">
    <text evidence="9">NADH-cytochrome b5 reductase involved in endoplasmic reticulum stress response pathway. Plays a critical role in protecting pancreatic beta-cells against oxidant stress, possibly by protecting the cell from excess buildup of reactive oxygen species (ROS).</text>
</comment>
<comment type="catalytic activity">
    <reaction>
        <text>2 Fe(III)-[cytochrome b5] + NADH = 2 Fe(II)-[cytochrome b5] + NAD(+) + H(+)</text>
        <dbReference type="Rhea" id="RHEA:46680"/>
        <dbReference type="Rhea" id="RHEA-COMP:10438"/>
        <dbReference type="Rhea" id="RHEA-COMP:10439"/>
        <dbReference type="ChEBI" id="CHEBI:15378"/>
        <dbReference type="ChEBI" id="CHEBI:29033"/>
        <dbReference type="ChEBI" id="CHEBI:29034"/>
        <dbReference type="ChEBI" id="CHEBI:57540"/>
        <dbReference type="ChEBI" id="CHEBI:57945"/>
        <dbReference type="EC" id="1.6.2.2"/>
    </reaction>
</comment>
<comment type="cofactor">
    <cofactor evidence="1">
        <name>FAD</name>
        <dbReference type="ChEBI" id="CHEBI:57692"/>
    </cofactor>
</comment>
<comment type="subcellular location">
    <subcellularLocation>
        <location>Endoplasmic reticulum</location>
    </subcellularLocation>
    <text evidence="1">Soluble protein.</text>
</comment>
<comment type="alternative products">
    <event type="alternative splicing"/>
    <isoform>
        <id>Q3TDX8-4</id>
        <name>1</name>
        <sequence type="displayed"/>
    </isoform>
    <isoform>
        <id>Q3TDX8-5</id>
        <name>2</name>
        <name>cb5/cb5rDelta12</name>
        <sequence type="described" ref="VSP_041453"/>
    </isoform>
</comment>
<comment type="tissue specificity">
    <text evidence="8 12">Ubiquitously expressed. Isoform 2 is expressed in testis, brain, skeletal muscle and in the male germline.</text>
</comment>
<comment type="disruption phenotype">
    <text evidence="9">Mice display insulin-deficient diabetes. Embryos and fetus develop normally. At 4 weeks of age, mice show have normal blood glucose levels but impaired glucose tolerance. Isolated islets have markedly impaired glucose- or arginine-stimulated insulin secretion. By 7 weeks of age, they develop severe hyperglycemia with markedly decreased serum insulin levels and nearly normal insulin tolerance. As the animals age, there is a progressive loss of beta cells in pancreatic islets, but there is no loss of alpha, delta, or PP cells. 4 week-old mice have enhanced sensitivity to the diabetogenic agent streptozotocin.</text>
</comment>
<comment type="similarity">
    <text evidence="14">Belongs to the flavoprotein pyridine nucleotide cytochrome reductase family.</text>
</comment>
<comment type="sequence caution" evidence="14">
    <conflict type="erroneous initiation">
        <sequence resource="EMBL-CDS" id="AAH25438"/>
    </conflict>
    <text>Truncated N-terminus.</text>
</comment>
<comment type="sequence caution" evidence="14">
    <conflict type="erroneous initiation">
        <sequence resource="EMBL-CDS" id="BAC41118"/>
    </conflict>
    <text>Truncated N-terminus.</text>
</comment>
<comment type="sequence caution" evidence="14">
    <conflict type="erroneous initiation">
        <sequence resource="EMBL-CDS" id="BAE34044"/>
    </conflict>
    <text>Truncated N-terminus.</text>
</comment>
<comment type="sequence caution" evidence="14">
    <conflict type="erroneous initiation">
        <sequence resource="EMBL-CDS" id="BAE42908"/>
    </conflict>
    <text>Truncated N-terminus.</text>
</comment>